<keyword id="KW-0217">Developmental protein</keyword>
<keyword id="KW-0221">Differentiation</keyword>
<keyword id="KW-0446">Lipid-binding</keyword>
<keyword id="KW-0472">Membrane</keyword>
<keyword id="KW-0896">Oogenesis</keyword>
<keyword id="KW-0675">Receptor</keyword>
<keyword id="KW-1185">Reference proteome</keyword>
<keyword id="KW-0754">Steroid-binding</keyword>
<keyword id="KW-0812">Transmembrane</keyword>
<keyword id="KW-1133">Transmembrane helix</keyword>
<sequence>MLSLIKLQRVFNVHQVPKAFHEDGIISGYRHPRSSATECVWSLFQLTNETLNVWTHFLPTWYFLWKLMTVLLMEDVWNEAYTWPLLVFLFSCCVYPLASSCAHTFSSMSTRARHICYFFDYGALSFYSLGSAISYSAYVFPDAWLSSSFHAYYISVAVFNTVLSTSLACYSRLGLPLLHYSHDIVERFSERQCPRMSKVLRILAFAYPYLFDNIPLFYRLFVCVGEGCTDNEANSVHVQHTLLAFLTSFLFATHLPERLAPGRFDYIGHSHQLFHVCAIIGTHFQMKAIEMDMGLRRSQLLASAPAISFNNTIGAALLCVSVSLGIICVYSLPLLYSSNPKNTANKE</sequence>
<accession>Q6DC77</accession>
<dbReference type="EMBL" id="BC078202">
    <property type="protein sequence ID" value="AAH78202.1"/>
    <property type="molecule type" value="mRNA"/>
</dbReference>
<dbReference type="RefSeq" id="NP_001003573.1">
    <property type="nucleotide sequence ID" value="NM_001003573.2"/>
</dbReference>
<dbReference type="FunCoup" id="Q6DC77">
    <property type="interactions" value="849"/>
</dbReference>
<dbReference type="STRING" id="7955.ENSDARP00000069075"/>
<dbReference type="PaxDb" id="7955-ENSDARP00000069075"/>
<dbReference type="Ensembl" id="ENSDART00000074587">
    <property type="protein sequence ID" value="ENSDARP00000069075"/>
    <property type="gene ID" value="ENSDARG00000052688"/>
</dbReference>
<dbReference type="GeneID" id="100007661"/>
<dbReference type="KEGG" id="dre:100007661"/>
<dbReference type="AGR" id="ZFIN:ZDB-GENE-040801-92"/>
<dbReference type="CTD" id="100007661"/>
<dbReference type="ZFIN" id="ZDB-GENE-040801-92">
    <property type="gene designation" value="paqr5b"/>
</dbReference>
<dbReference type="eggNOG" id="KOG0748">
    <property type="taxonomic scope" value="Eukaryota"/>
</dbReference>
<dbReference type="InParanoid" id="Q6DC77"/>
<dbReference type="OMA" id="IDQMPQV"/>
<dbReference type="OrthoDB" id="529367at2759"/>
<dbReference type="PhylomeDB" id="Q6DC77"/>
<dbReference type="TreeFam" id="TF319738"/>
<dbReference type="PRO" id="PR:Q6DC77"/>
<dbReference type="Proteomes" id="UP000000437">
    <property type="component" value="Chromosome 7"/>
</dbReference>
<dbReference type="Bgee" id="ENSDARG00000052688">
    <property type="expression patterns" value="Expressed in swim bladder and 8 other cell types or tissues"/>
</dbReference>
<dbReference type="ExpressionAtlas" id="Q6DC77">
    <property type="expression patterns" value="baseline"/>
</dbReference>
<dbReference type="GO" id="GO:0016020">
    <property type="term" value="C:membrane"/>
    <property type="evidence" value="ECO:0007669"/>
    <property type="project" value="UniProtKB-SubCell"/>
</dbReference>
<dbReference type="GO" id="GO:0038023">
    <property type="term" value="F:signaling receptor activity"/>
    <property type="evidence" value="ECO:0000318"/>
    <property type="project" value="GO_Central"/>
</dbReference>
<dbReference type="GO" id="GO:0005496">
    <property type="term" value="F:steroid binding"/>
    <property type="evidence" value="ECO:0007669"/>
    <property type="project" value="UniProtKB-KW"/>
</dbReference>
<dbReference type="GO" id="GO:0048477">
    <property type="term" value="P:oogenesis"/>
    <property type="evidence" value="ECO:0007669"/>
    <property type="project" value="UniProtKB-KW"/>
</dbReference>
<dbReference type="InterPro" id="IPR004254">
    <property type="entry name" value="AdipoR/HlyIII-related"/>
</dbReference>
<dbReference type="PANTHER" id="PTHR20855">
    <property type="entry name" value="ADIPOR/PROGESTIN RECEPTOR-RELATED"/>
    <property type="match status" value="1"/>
</dbReference>
<dbReference type="PANTHER" id="PTHR20855:SF38">
    <property type="entry name" value="MEMBRANE PROGESTIN RECEPTOR GAMMA"/>
    <property type="match status" value="1"/>
</dbReference>
<dbReference type="Pfam" id="PF03006">
    <property type="entry name" value="HlyIII"/>
    <property type="match status" value="1"/>
</dbReference>
<reference evidence="4" key="1">
    <citation type="submission" date="2004-07" db="EMBL/GenBank/DDBJ databases">
        <authorList>
            <consortium name="NIH - Zebrafish Gene Collection (ZGC) project"/>
        </authorList>
    </citation>
    <scope>NUCLEOTIDE SEQUENCE [LARGE SCALE MRNA]</scope>
    <source>
        <tissue evidence="4">Embryo</tissue>
    </source>
</reference>
<proteinExistence type="evidence at transcript level"/>
<feature type="chain" id="PRO_0000273242" description="Membrane progestin receptor gamma-B">
    <location>
        <begin position="1"/>
        <end position="347"/>
    </location>
</feature>
<feature type="topological domain" description="Cytoplasmic" evidence="3">
    <location>
        <begin position="1"/>
        <end position="52"/>
    </location>
</feature>
<feature type="transmembrane region" description="Helical; Name=1" evidence="3">
    <location>
        <begin position="53"/>
        <end position="73"/>
    </location>
</feature>
<feature type="topological domain" description="Extracellular" evidence="3">
    <location>
        <begin position="74"/>
        <end position="81"/>
    </location>
</feature>
<feature type="transmembrane region" description="Helical; Name=2" evidence="3">
    <location>
        <begin position="82"/>
        <end position="102"/>
    </location>
</feature>
<feature type="topological domain" description="Cytoplasmic" evidence="3">
    <location>
        <begin position="103"/>
        <end position="114"/>
    </location>
</feature>
<feature type="transmembrane region" description="Helical; Name=3" evidence="3">
    <location>
        <begin position="115"/>
        <end position="135"/>
    </location>
</feature>
<feature type="topological domain" description="Extracellular" evidence="3">
    <location>
        <begin position="136"/>
        <end position="138"/>
    </location>
</feature>
<feature type="transmembrane region" description="Helical; Name=4" evidence="3">
    <location>
        <begin position="139"/>
        <end position="159"/>
    </location>
</feature>
<feature type="topological domain" description="Cytoplasmic" evidence="3">
    <location>
        <begin position="160"/>
        <end position="201"/>
    </location>
</feature>
<feature type="transmembrane region" description="Helical; Name=5" evidence="3">
    <location>
        <begin position="202"/>
        <end position="222"/>
    </location>
</feature>
<feature type="topological domain" description="Extracellular" evidence="3">
    <location>
        <begin position="223"/>
        <end position="235"/>
    </location>
</feature>
<feature type="transmembrane region" description="Helical; Name=6" evidence="3">
    <location>
        <begin position="236"/>
        <end position="256"/>
    </location>
</feature>
<feature type="topological domain" description="Cytoplasmic" evidence="3">
    <location>
        <begin position="257"/>
        <end position="314"/>
    </location>
</feature>
<feature type="transmembrane region" description="Helical; Name=7" evidence="3">
    <location>
        <begin position="315"/>
        <end position="335"/>
    </location>
</feature>
<feature type="topological domain" description="Extracellular" evidence="3">
    <location>
        <begin position="336"/>
        <end position="347"/>
    </location>
</feature>
<organism>
    <name type="scientific">Danio rerio</name>
    <name type="common">Zebrafish</name>
    <name type="synonym">Brachydanio rerio</name>
    <dbReference type="NCBI Taxonomy" id="7955"/>
    <lineage>
        <taxon>Eukaryota</taxon>
        <taxon>Metazoa</taxon>
        <taxon>Chordata</taxon>
        <taxon>Craniata</taxon>
        <taxon>Vertebrata</taxon>
        <taxon>Euteleostomi</taxon>
        <taxon>Actinopterygii</taxon>
        <taxon>Neopterygii</taxon>
        <taxon>Teleostei</taxon>
        <taxon>Ostariophysi</taxon>
        <taxon>Cypriniformes</taxon>
        <taxon>Danionidae</taxon>
        <taxon>Danioninae</taxon>
        <taxon>Danio</taxon>
    </lineage>
</organism>
<evidence type="ECO:0000250" key="1">
    <source>
        <dbReference type="UniProtKB" id="Q86WK9"/>
    </source>
</evidence>
<evidence type="ECO:0000250" key="2">
    <source>
        <dbReference type="UniProtKB" id="Q9NXK6"/>
    </source>
</evidence>
<evidence type="ECO:0000255" key="3"/>
<evidence type="ECO:0000312" key="4">
    <source>
        <dbReference type="EMBL" id="AAH78202.1"/>
    </source>
</evidence>
<evidence type="ECO:0000312" key="5">
    <source>
        <dbReference type="ZFIN" id="ZDB-GENE-040801-92"/>
    </source>
</evidence>
<name>MPRGB_DANRE</name>
<protein>
    <recommendedName>
        <fullName>Membrane progestin receptor gamma-B</fullName>
        <shortName>mPR gamma-B</shortName>
    </recommendedName>
    <alternativeName>
        <fullName>Progestin and adipoQ receptor family member V-B</fullName>
    </alternativeName>
</protein>
<gene>
    <name evidence="5" type="primary">paqr5b</name>
    <name type="ORF">zgc:101065</name>
</gene>
<comment type="function">
    <text evidence="2">Steroid membrane receptor. Binds progesterone. May be involved in oocyte maturation (By similarity).</text>
</comment>
<comment type="subcellular location">
    <subcellularLocation>
        <location evidence="1 3">Membrane</location>
        <topology evidence="1 3">Multi-pass membrane protein</topology>
    </subcellularLocation>
</comment>
<comment type="similarity">
    <text evidence="3">Belongs to the ADIPOR family.</text>
</comment>